<keyword id="KW-0066">ATP synthesis</keyword>
<keyword id="KW-0997">Cell inner membrane</keyword>
<keyword id="KW-1003">Cell membrane</keyword>
<keyword id="KW-0138">CF(0)</keyword>
<keyword id="KW-0375">Hydrogen ion transport</keyword>
<keyword id="KW-0406">Ion transport</keyword>
<keyword id="KW-0472">Membrane</keyword>
<keyword id="KW-1185">Reference proteome</keyword>
<keyword id="KW-0812">Transmembrane</keyword>
<keyword id="KW-1133">Transmembrane helix</keyword>
<keyword id="KW-0813">Transport</keyword>
<accession>A8EWC4</accession>
<dbReference type="EMBL" id="CP000361">
    <property type="protein sequence ID" value="ABV68247.1"/>
    <property type="molecule type" value="Genomic_DNA"/>
</dbReference>
<dbReference type="RefSeq" id="WP_004510917.1">
    <property type="nucleotide sequence ID" value="NC_009850.1"/>
</dbReference>
<dbReference type="SMR" id="A8EWC4"/>
<dbReference type="STRING" id="367737.Abu_2030"/>
<dbReference type="GeneID" id="24304622"/>
<dbReference type="KEGG" id="abu:Abu_2030"/>
<dbReference type="eggNOG" id="COG0356">
    <property type="taxonomic scope" value="Bacteria"/>
</dbReference>
<dbReference type="HOGENOM" id="CLU_041018_2_2_7"/>
<dbReference type="Proteomes" id="UP000001136">
    <property type="component" value="Chromosome"/>
</dbReference>
<dbReference type="GO" id="GO:0005886">
    <property type="term" value="C:plasma membrane"/>
    <property type="evidence" value="ECO:0007669"/>
    <property type="project" value="UniProtKB-SubCell"/>
</dbReference>
<dbReference type="GO" id="GO:0045259">
    <property type="term" value="C:proton-transporting ATP synthase complex"/>
    <property type="evidence" value="ECO:0007669"/>
    <property type="project" value="UniProtKB-KW"/>
</dbReference>
<dbReference type="GO" id="GO:0046933">
    <property type="term" value="F:proton-transporting ATP synthase activity, rotational mechanism"/>
    <property type="evidence" value="ECO:0007669"/>
    <property type="project" value="UniProtKB-UniRule"/>
</dbReference>
<dbReference type="GO" id="GO:0042777">
    <property type="term" value="P:proton motive force-driven plasma membrane ATP synthesis"/>
    <property type="evidence" value="ECO:0007669"/>
    <property type="project" value="TreeGrafter"/>
</dbReference>
<dbReference type="CDD" id="cd00310">
    <property type="entry name" value="ATP-synt_Fo_a_6"/>
    <property type="match status" value="1"/>
</dbReference>
<dbReference type="FunFam" id="1.20.120.220:FF:000006">
    <property type="entry name" value="ATP synthase subunit a"/>
    <property type="match status" value="1"/>
</dbReference>
<dbReference type="Gene3D" id="1.20.120.220">
    <property type="entry name" value="ATP synthase, F0 complex, subunit A"/>
    <property type="match status" value="1"/>
</dbReference>
<dbReference type="HAMAP" id="MF_01393">
    <property type="entry name" value="ATP_synth_a_bact"/>
    <property type="match status" value="1"/>
</dbReference>
<dbReference type="InterPro" id="IPR045082">
    <property type="entry name" value="ATP_syn_F0_a_bact/chloroplast"/>
</dbReference>
<dbReference type="InterPro" id="IPR000568">
    <property type="entry name" value="ATP_synth_F0_asu"/>
</dbReference>
<dbReference type="InterPro" id="IPR035908">
    <property type="entry name" value="F0_ATP_A_sf"/>
</dbReference>
<dbReference type="NCBIfam" id="TIGR01131">
    <property type="entry name" value="ATP_synt_6_or_A"/>
    <property type="match status" value="1"/>
</dbReference>
<dbReference type="NCBIfam" id="NF004481">
    <property type="entry name" value="PRK05815.2-3"/>
    <property type="match status" value="1"/>
</dbReference>
<dbReference type="PANTHER" id="PTHR42823">
    <property type="entry name" value="ATP SYNTHASE SUBUNIT A, CHLOROPLASTIC"/>
    <property type="match status" value="1"/>
</dbReference>
<dbReference type="PANTHER" id="PTHR42823:SF3">
    <property type="entry name" value="ATP SYNTHASE SUBUNIT A, CHLOROPLASTIC"/>
    <property type="match status" value="1"/>
</dbReference>
<dbReference type="Pfam" id="PF00119">
    <property type="entry name" value="ATP-synt_A"/>
    <property type="match status" value="1"/>
</dbReference>
<dbReference type="PRINTS" id="PR00123">
    <property type="entry name" value="ATPASEA"/>
</dbReference>
<dbReference type="SUPFAM" id="SSF81336">
    <property type="entry name" value="F1F0 ATP synthase subunit A"/>
    <property type="match status" value="1"/>
</dbReference>
<sequence>MEGRLFTFLGAIGGHGQEWIILSHYVLVIGIIFIIARAATRKLQLVPTGSQNVLEAFVGGIISMGADTMGEKNARTYMPLIGSLALVIFVSNMIGVIPGFEAPTSNINFTLSLALIVFVYYNYLGIKKNGFVAYFKHFMGPMPVLAPLMFPIEIISHLSRIVSLSFRLFGSIRGDDMFLMVLLMLVPWILPLPGFFLLTAFGVLQAFIFSILTYVYIAGSIMMEHEEH</sequence>
<comment type="function">
    <text evidence="1">Key component of the proton channel; it plays a direct role in the translocation of protons across the membrane.</text>
</comment>
<comment type="subunit">
    <text evidence="1">F-type ATPases have 2 components, CF(1) - the catalytic core - and CF(0) - the membrane proton channel. CF(1) has five subunits: alpha(3), beta(3), gamma(1), delta(1), epsilon(1). CF(0) has three main subunits: a(1), b(2) and c(9-12). The alpha and beta chains form an alternating ring which encloses part of the gamma chain. CF(1) is attached to CF(0) by a central stalk formed by the gamma and epsilon chains, while a peripheral stalk is formed by the delta and b chains.</text>
</comment>
<comment type="subcellular location">
    <subcellularLocation>
        <location evidence="1">Cell inner membrane</location>
        <topology evidence="1">Multi-pass membrane protein</topology>
    </subcellularLocation>
</comment>
<comment type="similarity">
    <text evidence="1">Belongs to the ATPase A chain family.</text>
</comment>
<evidence type="ECO:0000255" key="1">
    <source>
        <dbReference type="HAMAP-Rule" id="MF_01393"/>
    </source>
</evidence>
<feature type="chain" id="PRO_0000362236" description="ATP synthase subunit a">
    <location>
        <begin position="1"/>
        <end position="228"/>
    </location>
</feature>
<feature type="transmembrane region" description="Helical" evidence="1">
    <location>
        <begin position="16"/>
        <end position="36"/>
    </location>
</feature>
<feature type="transmembrane region" description="Helical" evidence="1">
    <location>
        <begin position="45"/>
        <end position="65"/>
    </location>
</feature>
<feature type="transmembrane region" description="Helical" evidence="1">
    <location>
        <begin position="80"/>
        <end position="100"/>
    </location>
</feature>
<feature type="transmembrane region" description="Helical" evidence="1">
    <location>
        <begin position="106"/>
        <end position="126"/>
    </location>
</feature>
<feature type="transmembrane region" description="Helical" evidence="1">
    <location>
        <begin position="138"/>
        <end position="158"/>
    </location>
</feature>
<feature type="transmembrane region" description="Helical" evidence="1">
    <location>
        <begin position="178"/>
        <end position="198"/>
    </location>
</feature>
<feature type="transmembrane region" description="Helical" evidence="1">
    <location>
        <begin position="201"/>
        <end position="221"/>
    </location>
</feature>
<protein>
    <recommendedName>
        <fullName evidence="1">ATP synthase subunit a</fullName>
    </recommendedName>
    <alternativeName>
        <fullName evidence="1">ATP synthase F0 sector subunit a</fullName>
    </alternativeName>
    <alternativeName>
        <fullName evidence="1">F-ATPase subunit 6</fullName>
    </alternativeName>
</protein>
<proteinExistence type="inferred from homology"/>
<name>ATP6_ALIB4</name>
<reference key="1">
    <citation type="journal article" date="2007" name="PLoS ONE">
        <title>The complete genome sequence and analysis of the Epsilonproteobacterium Arcobacter butzleri.</title>
        <authorList>
            <person name="Miller W.G."/>
            <person name="Parker C.T."/>
            <person name="Rubenfield M."/>
            <person name="Mendz G.L."/>
            <person name="Woesten M.M.S.M."/>
            <person name="Ussery D.W."/>
            <person name="Stolz J.F."/>
            <person name="Binnewies T.T."/>
            <person name="Hallin P.F."/>
            <person name="Wang G."/>
            <person name="Malek J.A."/>
            <person name="Rogosin A."/>
            <person name="Stanker L.H."/>
            <person name="Mandrell R.E."/>
        </authorList>
    </citation>
    <scope>NUCLEOTIDE SEQUENCE [LARGE SCALE GENOMIC DNA]</scope>
    <source>
        <strain>RM4018</strain>
    </source>
</reference>
<organism>
    <name type="scientific">Aliarcobacter butzleri (strain RM4018)</name>
    <name type="common">Arcobacter butzleri</name>
    <dbReference type="NCBI Taxonomy" id="367737"/>
    <lineage>
        <taxon>Bacteria</taxon>
        <taxon>Pseudomonadati</taxon>
        <taxon>Campylobacterota</taxon>
        <taxon>Epsilonproteobacteria</taxon>
        <taxon>Campylobacterales</taxon>
        <taxon>Arcobacteraceae</taxon>
        <taxon>Aliarcobacter</taxon>
    </lineage>
</organism>
<gene>
    <name evidence="1" type="primary">atpB</name>
    <name type="ordered locus">Abu_2030</name>
</gene>